<sequence length="98" mass="11143">MKAYDIIVSPMLTEKTNTQRESINVYVFKVNKRANKKEVGAAIKELFNVTPVSCNLLNIKSKAKVVVSRKGYPIGKGKTSSWKKAYVYLKKEDKIDIF</sequence>
<dbReference type="EMBL" id="CP000395">
    <property type="protein sequence ID" value="ABH01751.1"/>
    <property type="molecule type" value="Genomic_DNA"/>
</dbReference>
<dbReference type="EMBL" id="CP002933">
    <property type="protein sequence ID" value="AEL69705.1"/>
    <property type="molecule type" value="Genomic_DNA"/>
</dbReference>
<dbReference type="RefSeq" id="WP_002557071.1">
    <property type="nucleotide sequence ID" value="NZ_CP160066.1"/>
</dbReference>
<dbReference type="SMR" id="Q0SN27"/>
<dbReference type="STRING" id="29518.BLA32_01860"/>
<dbReference type="GeneID" id="77265327"/>
<dbReference type="KEGG" id="baf:BAPKO_0508"/>
<dbReference type="KEGG" id="bafz:BafPKo_0497"/>
<dbReference type="PATRIC" id="fig|390236.22.peg.477"/>
<dbReference type="eggNOG" id="COG0089">
    <property type="taxonomic scope" value="Bacteria"/>
</dbReference>
<dbReference type="HOGENOM" id="CLU_037562_3_1_12"/>
<dbReference type="OrthoDB" id="9793353at2"/>
<dbReference type="Proteomes" id="UP000005216">
    <property type="component" value="Chromosome"/>
</dbReference>
<dbReference type="GO" id="GO:1990904">
    <property type="term" value="C:ribonucleoprotein complex"/>
    <property type="evidence" value="ECO:0007669"/>
    <property type="project" value="UniProtKB-KW"/>
</dbReference>
<dbReference type="GO" id="GO:0005840">
    <property type="term" value="C:ribosome"/>
    <property type="evidence" value="ECO:0007669"/>
    <property type="project" value="UniProtKB-KW"/>
</dbReference>
<dbReference type="GO" id="GO:0019843">
    <property type="term" value="F:rRNA binding"/>
    <property type="evidence" value="ECO:0007669"/>
    <property type="project" value="UniProtKB-UniRule"/>
</dbReference>
<dbReference type="GO" id="GO:0003735">
    <property type="term" value="F:structural constituent of ribosome"/>
    <property type="evidence" value="ECO:0007669"/>
    <property type="project" value="InterPro"/>
</dbReference>
<dbReference type="GO" id="GO:0006412">
    <property type="term" value="P:translation"/>
    <property type="evidence" value="ECO:0007669"/>
    <property type="project" value="UniProtKB-UniRule"/>
</dbReference>
<dbReference type="Gene3D" id="3.30.70.330">
    <property type="match status" value="1"/>
</dbReference>
<dbReference type="HAMAP" id="MF_01369_B">
    <property type="entry name" value="Ribosomal_uL23_B"/>
    <property type="match status" value="1"/>
</dbReference>
<dbReference type="InterPro" id="IPR012677">
    <property type="entry name" value="Nucleotide-bd_a/b_plait_sf"/>
</dbReference>
<dbReference type="InterPro" id="IPR013025">
    <property type="entry name" value="Ribosomal_uL23-like"/>
</dbReference>
<dbReference type="InterPro" id="IPR012678">
    <property type="entry name" value="Ribosomal_uL23/eL15/eS24_sf"/>
</dbReference>
<dbReference type="NCBIfam" id="NF004363">
    <property type="entry name" value="PRK05738.2-4"/>
    <property type="match status" value="1"/>
</dbReference>
<dbReference type="PANTHER" id="PTHR11620">
    <property type="entry name" value="60S RIBOSOMAL PROTEIN L23A"/>
    <property type="match status" value="1"/>
</dbReference>
<dbReference type="Pfam" id="PF00276">
    <property type="entry name" value="Ribosomal_L23"/>
    <property type="match status" value="1"/>
</dbReference>
<dbReference type="SUPFAM" id="SSF54189">
    <property type="entry name" value="Ribosomal proteins S24e, L23 and L15e"/>
    <property type="match status" value="1"/>
</dbReference>
<protein>
    <recommendedName>
        <fullName evidence="1">Large ribosomal subunit protein uL23</fullName>
    </recommendedName>
    <alternativeName>
        <fullName evidence="2">50S ribosomal protein L23</fullName>
    </alternativeName>
</protein>
<proteinExistence type="inferred from homology"/>
<accession>Q0SN27</accession>
<accession>G0ISC4</accession>
<evidence type="ECO:0000255" key="1">
    <source>
        <dbReference type="HAMAP-Rule" id="MF_01369"/>
    </source>
</evidence>
<evidence type="ECO:0000305" key="2"/>
<name>RL23_BORAP</name>
<gene>
    <name evidence="1" type="primary">rplW</name>
    <name type="ordered locus">BAPKO_0508</name>
    <name type="ordered locus">BafPKo_0497</name>
</gene>
<keyword id="KW-0687">Ribonucleoprotein</keyword>
<keyword id="KW-0689">Ribosomal protein</keyword>
<keyword id="KW-0694">RNA-binding</keyword>
<keyword id="KW-0699">rRNA-binding</keyword>
<reference key="1">
    <citation type="journal article" date="2006" name="BMC Genomics">
        <title>Comparative genome analysis: selection pressure on the Borrelia vls cassettes is essential for infectivity.</title>
        <authorList>
            <person name="Gloeckner G."/>
            <person name="Schulte-Spechtel U."/>
            <person name="Schilhabel M."/>
            <person name="Felder M."/>
            <person name="Suehnel J."/>
            <person name="Wilske B."/>
            <person name="Platzer M."/>
        </authorList>
    </citation>
    <scope>NUCLEOTIDE SEQUENCE [LARGE SCALE GENOMIC DNA]</scope>
    <source>
        <strain>PKo</strain>
    </source>
</reference>
<reference key="2">
    <citation type="journal article" date="2011" name="J. Bacteriol.">
        <title>Whole-genome sequences of two Borrelia afzelii and two Borrelia garinii Lyme disease agent isolates.</title>
        <authorList>
            <person name="Casjens S.R."/>
            <person name="Mongodin E.F."/>
            <person name="Qiu W.G."/>
            <person name="Dunn J.J."/>
            <person name="Luft B.J."/>
            <person name="Fraser-Liggett C.M."/>
            <person name="Schutzer S.E."/>
        </authorList>
    </citation>
    <scope>NUCLEOTIDE SEQUENCE [LARGE SCALE GENOMIC DNA]</scope>
    <source>
        <strain>PKo</strain>
    </source>
</reference>
<comment type="function">
    <text evidence="1">One of the early assembly proteins it binds 23S rRNA. One of the proteins that surrounds the polypeptide exit tunnel on the outside of the ribosome. Forms the main docking site for trigger factor binding to the ribosome.</text>
</comment>
<comment type="subunit">
    <text evidence="1">Part of the 50S ribosomal subunit. Contacts protein L29, and trigger factor when it is bound to the ribosome.</text>
</comment>
<comment type="similarity">
    <text evidence="1">Belongs to the universal ribosomal protein uL23 family.</text>
</comment>
<feature type="chain" id="PRO_1000068042" description="Large ribosomal subunit protein uL23">
    <location>
        <begin position="1"/>
        <end position="98"/>
    </location>
</feature>
<organism>
    <name type="scientific">Borreliella afzelii (strain PKo)</name>
    <name type="common">Borrelia afzelii</name>
    <dbReference type="NCBI Taxonomy" id="390236"/>
    <lineage>
        <taxon>Bacteria</taxon>
        <taxon>Pseudomonadati</taxon>
        <taxon>Spirochaetota</taxon>
        <taxon>Spirochaetia</taxon>
        <taxon>Spirochaetales</taxon>
        <taxon>Borreliaceae</taxon>
        <taxon>Borreliella</taxon>
    </lineage>
</organism>